<reference key="1">
    <citation type="journal article" date="2004" name="Nature">
        <title>The DNA sequence and comparative analysis of human chromosome 10.</title>
        <authorList>
            <person name="Deloukas P."/>
            <person name="Earthrowl M.E."/>
            <person name="Grafham D.V."/>
            <person name="Rubenfield M."/>
            <person name="French L."/>
            <person name="Steward C.A."/>
            <person name="Sims S.K."/>
            <person name="Jones M.C."/>
            <person name="Searle S."/>
            <person name="Scott C."/>
            <person name="Howe K."/>
            <person name="Hunt S.E."/>
            <person name="Andrews T.D."/>
            <person name="Gilbert J.G.R."/>
            <person name="Swarbreck D."/>
            <person name="Ashurst J.L."/>
            <person name="Taylor A."/>
            <person name="Battles J."/>
            <person name="Bird C.P."/>
            <person name="Ainscough R."/>
            <person name="Almeida J.P."/>
            <person name="Ashwell R.I.S."/>
            <person name="Ambrose K.D."/>
            <person name="Babbage A.K."/>
            <person name="Bagguley C.L."/>
            <person name="Bailey J."/>
            <person name="Banerjee R."/>
            <person name="Bates K."/>
            <person name="Beasley H."/>
            <person name="Bray-Allen S."/>
            <person name="Brown A.J."/>
            <person name="Brown J.Y."/>
            <person name="Burford D.C."/>
            <person name="Burrill W."/>
            <person name="Burton J."/>
            <person name="Cahill P."/>
            <person name="Camire D."/>
            <person name="Carter N.P."/>
            <person name="Chapman J.C."/>
            <person name="Clark S.Y."/>
            <person name="Clarke G."/>
            <person name="Clee C.M."/>
            <person name="Clegg S."/>
            <person name="Corby N."/>
            <person name="Coulson A."/>
            <person name="Dhami P."/>
            <person name="Dutta I."/>
            <person name="Dunn M."/>
            <person name="Faulkner L."/>
            <person name="Frankish A."/>
            <person name="Frankland J.A."/>
            <person name="Garner P."/>
            <person name="Garnett J."/>
            <person name="Gribble S."/>
            <person name="Griffiths C."/>
            <person name="Grocock R."/>
            <person name="Gustafson E."/>
            <person name="Hammond S."/>
            <person name="Harley J.L."/>
            <person name="Hart E."/>
            <person name="Heath P.D."/>
            <person name="Ho T.P."/>
            <person name="Hopkins B."/>
            <person name="Horne J."/>
            <person name="Howden P.J."/>
            <person name="Huckle E."/>
            <person name="Hynds C."/>
            <person name="Johnson C."/>
            <person name="Johnson D."/>
            <person name="Kana A."/>
            <person name="Kay M."/>
            <person name="Kimberley A.M."/>
            <person name="Kershaw J.K."/>
            <person name="Kokkinaki M."/>
            <person name="Laird G.K."/>
            <person name="Lawlor S."/>
            <person name="Lee H.M."/>
            <person name="Leongamornlert D.A."/>
            <person name="Laird G."/>
            <person name="Lloyd C."/>
            <person name="Lloyd D.M."/>
            <person name="Loveland J."/>
            <person name="Lovell J."/>
            <person name="McLaren S."/>
            <person name="McLay K.E."/>
            <person name="McMurray A."/>
            <person name="Mashreghi-Mohammadi M."/>
            <person name="Matthews L."/>
            <person name="Milne S."/>
            <person name="Nickerson T."/>
            <person name="Nguyen M."/>
            <person name="Overton-Larty E."/>
            <person name="Palmer S.A."/>
            <person name="Pearce A.V."/>
            <person name="Peck A.I."/>
            <person name="Pelan S."/>
            <person name="Phillimore B."/>
            <person name="Porter K."/>
            <person name="Rice C.M."/>
            <person name="Rogosin A."/>
            <person name="Ross M.T."/>
            <person name="Sarafidou T."/>
            <person name="Sehra H.K."/>
            <person name="Shownkeen R."/>
            <person name="Skuce C.D."/>
            <person name="Smith M."/>
            <person name="Standring L."/>
            <person name="Sycamore N."/>
            <person name="Tester J."/>
            <person name="Thorpe A."/>
            <person name="Torcasso W."/>
            <person name="Tracey A."/>
            <person name="Tromans A."/>
            <person name="Tsolas J."/>
            <person name="Wall M."/>
            <person name="Walsh J."/>
            <person name="Wang H."/>
            <person name="Weinstock K."/>
            <person name="West A.P."/>
            <person name="Willey D.L."/>
            <person name="Whitehead S.L."/>
            <person name="Wilming L."/>
            <person name="Wray P.W."/>
            <person name="Young L."/>
            <person name="Chen Y."/>
            <person name="Lovering R.C."/>
            <person name="Moschonas N.K."/>
            <person name="Siebert R."/>
            <person name="Fechtel K."/>
            <person name="Bentley D."/>
            <person name="Durbin R.M."/>
            <person name="Hubbard T."/>
            <person name="Doucette-Stamm L."/>
            <person name="Beck S."/>
            <person name="Smith D.R."/>
            <person name="Rogers J."/>
        </authorList>
    </citation>
    <scope>NUCLEOTIDE SEQUENCE [LARGE SCALE GENOMIC DNA]</scope>
</reference>
<reference key="2">
    <citation type="journal article" date="2004" name="Genome Res.">
        <title>The status, quality, and expansion of the NIH full-length cDNA project: the Mammalian Gene Collection (MGC).</title>
        <authorList>
            <consortium name="The MGC Project Team"/>
        </authorList>
    </citation>
    <scope>NUCLEOTIDE SEQUENCE [LARGE SCALE MRNA]</scope>
</reference>
<keyword id="KW-1185">Reference proteome</keyword>
<sequence>MLGGLGKLAAEGLAHRTEKATEGAIHAVEEVVKEVVGHAKETGEKAIAEAIKKAQESGDKKMKEITETVTNTVTNAITHAAESLDKLGQ</sequence>
<evidence type="ECO:0000305" key="1"/>
<evidence type="ECO:0000312" key="2">
    <source>
        <dbReference type="HGNC" id="HGNC:23586"/>
    </source>
</evidence>
<name>FM25C_HUMAN</name>
<accession>B3EWG5</accession>
<accession>B2RV02</accession>
<accession>Q5VTM1</accession>
<dbReference type="EMBL" id="AL603966">
    <property type="status" value="NOT_ANNOTATED_CDS"/>
    <property type="molecule type" value="Genomic_DNA"/>
</dbReference>
<dbReference type="EMBL" id="BC146955">
    <property type="protein sequence ID" value="AAI46956.1"/>
    <property type="molecule type" value="mRNA"/>
</dbReference>
<dbReference type="EMBL" id="BC146968">
    <property type="protein sequence ID" value="AAI46969.1"/>
    <property type="molecule type" value="mRNA"/>
</dbReference>
<dbReference type="EMBL" id="BC146972">
    <property type="protein sequence ID" value="AAI46973.1"/>
    <property type="molecule type" value="mRNA"/>
</dbReference>
<dbReference type="EMBL" id="BC146989">
    <property type="protein sequence ID" value="AAI46990.1"/>
    <property type="molecule type" value="mRNA"/>
</dbReference>
<dbReference type="EMBL" id="BC146990">
    <property type="protein sequence ID" value="AAI46991.1"/>
    <property type="molecule type" value="mRNA"/>
</dbReference>
<dbReference type="EMBL" id="BC146991">
    <property type="protein sequence ID" value="AAI46992.1"/>
    <property type="molecule type" value="mRNA"/>
</dbReference>
<dbReference type="EMBL" id="BC147022">
    <property type="protein sequence ID" value="AAI47023.1"/>
    <property type="molecule type" value="mRNA"/>
</dbReference>
<dbReference type="EMBL" id="BC147026">
    <property type="protein sequence ID" value="AAI47027.1"/>
    <property type="molecule type" value="mRNA"/>
</dbReference>
<dbReference type="CCDS" id="CCDS76299.1"/>
<dbReference type="RefSeq" id="NP_001131020.1">
    <property type="nucleotide sequence ID" value="NM_001137548.3"/>
</dbReference>
<dbReference type="RefSeq" id="NP_001131021.1">
    <property type="nucleotide sequence ID" value="NM_001137549.1"/>
</dbReference>
<dbReference type="SMR" id="B3EWG5"/>
<dbReference type="BioGRID" id="135986">
    <property type="interactions" value="21"/>
</dbReference>
<dbReference type="BioGRID" id="568554">
    <property type="interactions" value="18"/>
</dbReference>
<dbReference type="BioGRID" id="569275">
    <property type="interactions" value="25"/>
</dbReference>
<dbReference type="FunCoup" id="B3EWG5">
    <property type="interactions" value="2"/>
</dbReference>
<dbReference type="BioMuta" id="FAM25C"/>
<dbReference type="jPOST" id="B3EWG5"/>
<dbReference type="MassIVE" id="B3EWG5"/>
<dbReference type="Pumba" id="B3EWG5"/>
<dbReference type="DNASU" id="644054"/>
<dbReference type="Ensembl" id="ENST00000617224.3">
    <property type="protein sequence ID" value="ENSP00000485370.1"/>
    <property type="gene ID" value="ENSG00000276430.3"/>
</dbReference>
<dbReference type="Ensembl" id="ENST00000672360.1">
    <property type="protein sequence ID" value="ENSP00000500536.1"/>
    <property type="gene ID" value="ENSG00000288481.1"/>
</dbReference>
<dbReference type="GeneID" id="100133093"/>
<dbReference type="GeneID" id="644054"/>
<dbReference type="KEGG" id="hsa:100133093"/>
<dbReference type="KEGG" id="hsa:643161"/>
<dbReference type="KEGG" id="hsa:644054"/>
<dbReference type="MANE-Select" id="ENST00000617224.3">
    <property type="protein sequence ID" value="ENSP00000485370.1"/>
    <property type="RefSeq nucleotide sequence ID" value="NM_001137548.3"/>
    <property type="RefSeq protein sequence ID" value="NP_001131020.1"/>
</dbReference>
<dbReference type="AGR" id="HGNC:23436"/>
<dbReference type="AGR" id="HGNC:23586"/>
<dbReference type="AGR" id="HGNC:23590"/>
<dbReference type="CTD" id="100133093"/>
<dbReference type="CTD" id="643161"/>
<dbReference type="CTD" id="644054"/>
<dbReference type="GeneCards" id="FAM25C"/>
<dbReference type="HGNC" id="HGNC:23586">
    <property type="gene designation" value="FAM25C"/>
</dbReference>
<dbReference type="HPA" id="ENSG00000276430">
    <property type="expression patterns" value="Group enriched (cervix, esophagus, salivary gland, skin, vagina)"/>
</dbReference>
<dbReference type="neXtProt" id="NX_B3EWG5"/>
<dbReference type="OpenTargets" id="ENSG00000188100"/>
<dbReference type="OpenTargets" id="ENSG00000276430"/>
<dbReference type="VEuPathDB" id="HostDB:ENSG00000276430"/>
<dbReference type="HOGENOM" id="CLU_2454157_0_0_1"/>
<dbReference type="InParanoid" id="B3EWG5"/>
<dbReference type="PAN-GO" id="B3EWG5">
    <property type="GO annotations" value="0 GO annotations based on evolutionary models"/>
</dbReference>
<dbReference type="PhylomeDB" id="B3EWG5"/>
<dbReference type="PathwayCommons" id="B3EWG5"/>
<dbReference type="SignaLink" id="B3EWG5"/>
<dbReference type="BioGRID-ORCS" id="100133093">
    <property type="hits" value="365 hits in 652 CRISPR screens"/>
</dbReference>
<dbReference type="BioGRID-ORCS" id="643161">
    <property type="hits" value="134 hits in 1045 CRISPR screens"/>
</dbReference>
<dbReference type="BioGRID-ORCS" id="644054">
    <property type="hits" value="23 hits in 306 CRISPR screens"/>
</dbReference>
<dbReference type="Pharos" id="B3EWG5">
    <property type="development level" value="Tdark"/>
</dbReference>
<dbReference type="PRO" id="PR:B3EWG5"/>
<dbReference type="Proteomes" id="UP000005640">
    <property type="component" value="Chromosome 10"/>
</dbReference>
<dbReference type="RNAct" id="B3EWG5">
    <property type="molecule type" value="protein"/>
</dbReference>
<dbReference type="Bgee" id="ENSG00000276430">
    <property type="expression patterns" value="Expressed in skin of leg and 54 other cell types or tissues"/>
</dbReference>
<dbReference type="InterPro" id="IPR023243">
    <property type="entry name" value="FAM25"/>
</dbReference>
<dbReference type="PANTHER" id="PTHR34994">
    <property type="entry name" value="PROTEIN FAM25A-RELATED"/>
    <property type="match status" value="1"/>
</dbReference>
<dbReference type="PANTHER" id="PTHR34994:SF1">
    <property type="entry name" value="PROTEIN FAM25A-RELATED"/>
    <property type="match status" value="1"/>
</dbReference>
<dbReference type="Pfam" id="PF15825">
    <property type="entry name" value="FAM25"/>
    <property type="match status" value="1"/>
</dbReference>
<dbReference type="PRINTS" id="PR02048">
    <property type="entry name" value="PROTEINF25"/>
</dbReference>
<protein>
    <recommendedName>
        <fullName evidence="1">Protein FAM25C</fullName>
    </recommendedName>
</protein>
<gene>
    <name evidence="2" type="primary">FAM25C</name>
</gene>
<organism>
    <name type="scientific">Homo sapiens</name>
    <name type="common">Human</name>
    <dbReference type="NCBI Taxonomy" id="9606"/>
    <lineage>
        <taxon>Eukaryota</taxon>
        <taxon>Metazoa</taxon>
        <taxon>Chordata</taxon>
        <taxon>Craniata</taxon>
        <taxon>Vertebrata</taxon>
        <taxon>Euteleostomi</taxon>
        <taxon>Mammalia</taxon>
        <taxon>Eutheria</taxon>
        <taxon>Euarchontoglires</taxon>
        <taxon>Primates</taxon>
        <taxon>Haplorrhini</taxon>
        <taxon>Catarrhini</taxon>
        <taxon>Hominidae</taxon>
        <taxon>Homo</taxon>
    </lineage>
</organism>
<proteinExistence type="inferred from homology"/>
<comment type="similarity">
    <text evidence="1">Belongs to the FAM25 family.</text>
</comment>
<feature type="chain" id="PRO_0000416047" description="Protein FAM25C">
    <location>
        <begin position="1"/>
        <end position="89"/>
    </location>
</feature>